<sequence length="474" mass="50832">MSQDFDYDLVIIGAGVGGHGAALHAVKCGLKTAIIEAKDMGGTCVNRGCIPSKALLAASGRVREMSDQDHLQQLGIQINGVTFTREAIAAHANDLVSKIQSDLTNSLTRLKVDTIRGWGKVSGPQEVTVIGDNETRILKAKEIMLCPGSVPFVPPGIEIDHKTVFTSDEAVKLETLPQWIAIIGSGYIGLEFSDVYTALGCEVTMIEALPDLMPGFDPEIAKIAERVLIKSRDIETYTGVFATKIKAGSPVEIELTDAKTKEVIDTLEVDACLVATGRIPATKNLGLETVGVETDRRGFIEVNDQMQVIKDGKPVPHLWAVGDATGKMMLAHAASGQGVVAVENICGRKTEVDYRAIPAAAFTHPEISYVGLTEAQAKELGEKEGFVVSTAKTYFKGNSKALAEKETDGIAKVVYRQDTGELLGAHIIGIHASDLIQEAAQAIADRKSVRELAFHVHAHPTLSEVLDEAYKRAV</sequence>
<organism>
    <name type="scientific">Synechocystis sp. (strain ATCC 27184 / PCC 6803 / Kazusa)</name>
    <dbReference type="NCBI Taxonomy" id="1111708"/>
    <lineage>
        <taxon>Bacteria</taxon>
        <taxon>Bacillati</taxon>
        <taxon>Cyanobacteriota</taxon>
        <taxon>Cyanophyceae</taxon>
        <taxon>Synechococcales</taxon>
        <taxon>Merismopediaceae</taxon>
        <taxon>Synechocystis</taxon>
    </lineage>
</organism>
<proteinExistence type="evidence at protein level"/>
<accession>P72740</accession>
<accession>Q53395</accession>
<comment type="function">
    <text>Lipoamide dehydrogenase is a component of the alpha-ketoacid dehydrogenase complexes.</text>
</comment>
<comment type="catalytic activity">
    <reaction>
        <text>N(6)-[(R)-dihydrolipoyl]-L-lysyl-[protein] + NAD(+) = N(6)-[(R)-lipoyl]-L-lysyl-[protein] + NADH + H(+)</text>
        <dbReference type="Rhea" id="RHEA:15045"/>
        <dbReference type="Rhea" id="RHEA-COMP:10474"/>
        <dbReference type="Rhea" id="RHEA-COMP:10475"/>
        <dbReference type="ChEBI" id="CHEBI:15378"/>
        <dbReference type="ChEBI" id="CHEBI:57540"/>
        <dbReference type="ChEBI" id="CHEBI:57945"/>
        <dbReference type="ChEBI" id="CHEBI:83099"/>
        <dbReference type="ChEBI" id="CHEBI:83100"/>
        <dbReference type="EC" id="1.8.1.4"/>
    </reaction>
</comment>
<comment type="cofactor">
    <cofactor evidence="1">
        <name>FAD</name>
        <dbReference type="ChEBI" id="CHEBI:57692"/>
    </cofactor>
    <text evidence="1">Binds 1 FAD per subunit.</text>
</comment>
<comment type="subunit">
    <text evidence="1">Homodimer.</text>
</comment>
<comment type="subcellular location">
    <subcellularLocation>
        <location evidence="1">Cell inner membrane</location>
        <topology evidence="1">Peripheral membrane protein</topology>
        <orientation evidence="1">Periplasmic side</orientation>
    </subcellularLocation>
</comment>
<comment type="miscellaneous">
    <text>The active site is a redox-active disulfide bond.</text>
</comment>
<comment type="similarity">
    <text evidence="3">Belongs to the class-I pyridine nucleotide-disulfide oxidoreductase family.</text>
</comment>
<comment type="sequence caution" evidence="3">
    <conflict type="erroneous initiation">
        <sequence resource="EMBL-CDS" id="BAA16755"/>
    </conflict>
</comment>
<reference key="1">
    <citation type="journal article" date="1996" name="DNA Res.">
        <title>Sequence analysis of the genome of the unicellular cyanobacterium Synechocystis sp. strain PCC6803. II. Sequence determination of the entire genome and assignment of potential protein-coding regions.</title>
        <authorList>
            <person name="Kaneko T."/>
            <person name="Sato S."/>
            <person name="Kotani H."/>
            <person name="Tanaka A."/>
            <person name="Asamizu E."/>
            <person name="Nakamura Y."/>
            <person name="Miyajima N."/>
            <person name="Hirosawa M."/>
            <person name="Sugiura M."/>
            <person name="Sasamoto S."/>
            <person name="Kimura T."/>
            <person name="Hosouchi T."/>
            <person name="Matsuno A."/>
            <person name="Muraki A."/>
            <person name="Nakazaki N."/>
            <person name="Naruo K."/>
            <person name="Okumura S."/>
            <person name="Shimpo S."/>
            <person name="Takeuchi C."/>
            <person name="Wada T."/>
            <person name="Watanabe A."/>
            <person name="Yamada M."/>
            <person name="Yasuda M."/>
            <person name="Tabata S."/>
        </authorList>
    </citation>
    <scope>NUCLEOTIDE SEQUENCE [LARGE SCALE GENOMIC DNA]</scope>
    <source>
        <strain>ATCC 27184 / PCC 6803 / Kazusa</strain>
    </source>
</reference>
<reference key="2">
    <citation type="journal article" date="1997" name="Microbiology">
        <title>Characterization of a gene encoding dihydrolipoamide dehydrogenase of the cyanobacterium Synechocystis sp. strain PCC 6803.</title>
        <authorList>
            <person name="Engels A."/>
            <person name="Pistorius E.K."/>
        </authorList>
    </citation>
    <scope>NUCLEOTIDE SEQUENCE [GENOMIC DNA]</scope>
    <scope>PROTEIN SEQUENCE OF 2-18</scope>
    <scope>CHARACTERIZATION</scope>
</reference>
<gene>
    <name type="primary">lpdA</name>
    <name type="synonym">pdhD</name>
    <name type="ordered locus">slr1096</name>
</gene>
<evidence type="ECO:0000250" key="1"/>
<evidence type="ECO:0000269" key="2">
    <source>
    </source>
</evidence>
<evidence type="ECO:0000305" key="3"/>
<dbReference type="EC" id="1.8.1.4"/>
<dbReference type="EMBL" id="BA000022">
    <property type="protein sequence ID" value="BAA16755.1"/>
    <property type="status" value="ALT_INIT"/>
    <property type="molecule type" value="Genomic_DNA"/>
</dbReference>
<dbReference type="EMBL" id="Z48564">
    <property type="protein sequence ID" value="CAA88451.1"/>
    <property type="molecule type" value="Genomic_DNA"/>
</dbReference>
<dbReference type="PIR" id="S74603">
    <property type="entry name" value="S74603"/>
</dbReference>
<dbReference type="SMR" id="P72740"/>
<dbReference type="FunCoup" id="P72740">
    <property type="interactions" value="479"/>
</dbReference>
<dbReference type="IntAct" id="P72740">
    <property type="interactions" value="2"/>
</dbReference>
<dbReference type="STRING" id="1148.gene:10497611"/>
<dbReference type="PaxDb" id="1148-1651828"/>
<dbReference type="EnsemblBacteria" id="BAA16755">
    <property type="protein sequence ID" value="BAA16755"/>
    <property type="gene ID" value="BAA16755"/>
</dbReference>
<dbReference type="KEGG" id="syn:slr1096"/>
<dbReference type="eggNOG" id="COG1249">
    <property type="taxonomic scope" value="Bacteria"/>
</dbReference>
<dbReference type="InParanoid" id="P72740"/>
<dbReference type="PhylomeDB" id="P72740"/>
<dbReference type="BioCyc" id="MetaCyc:MONOMER-22028"/>
<dbReference type="BRENDA" id="1.4.1.27">
    <property type="organism ID" value="6192"/>
</dbReference>
<dbReference type="Proteomes" id="UP000001425">
    <property type="component" value="Chromosome"/>
</dbReference>
<dbReference type="GO" id="GO:0045252">
    <property type="term" value="C:oxoglutarate dehydrogenase complex"/>
    <property type="evidence" value="ECO:0000318"/>
    <property type="project" value="GO_Central"/>
</dbReference>
<dbReference type="GO" id="GO:0005886">
    <property type="term" value="C:plasma membrane"/>
    <property type="evidence" value="ECO:0007669"/>
    <property type="project" value="UniProtKB-SubCell"/>
</dbReference>
<dbReference type="GO" id="GO:0004148">
    <property type="term" value="F:dihydrolipoyl dehydrogenase (NADH) activity"/>
    <property type="evidence" value="ECO:0000318"/>
    <property type="project" value="GO_Central"/>
</dbReference>
<dbReference type="GO" id="GO:0050660">
    <property type="term" value="F:flavin adenine dinucleotide binding"/>
    <property type="evidence" value="ECO:0000318"/>
    <property type="project" value="GO_Central"/>
</dbReference>
<dbReference type="GO" id="GO:0006103">
    <property type="term" value="P:2-oxoglutarate metabolic process"/>
    <property type="evidence" value="ECO:0000318"/>
    <property type="project" value="GO_Central"/>
</dbReference>
<dbReference type="GO" id="GO:0006090">
    <property type="term" value="P:pyruvate metabolic process"/>
    <property type="evidence" value="ECO:0000318"/>
    <property type="project" value="GO_Central"/>
</dbReference>
<dbReference type="FunFam" id="3.30.390.30:FF:000001">
    <property type="entry name" value="Dihydrolipoyl dehydrogenase"/>
    <property type="match status" value="1"/>
</dbReference>
<dbReference type="Gene3D" id="3.30.390.30">
    <property type="match status" value="1"/>
</dbReference>
<dbReference type="Gene3D" id="3.50.50.60">
    <property type="entry name" value="FAD/NAD(P)-binding domain"/>
    <property type="match status" value="2"/>
</dbReference>
<dbReference type="InterPro" id="IPR050151">
    <property type="entry name" value="Class-I_Pyr_Nuc-Dis_Oxidored"/>
</dbReference>
<dbReference type="InterPro" id="IPR036188">
    <property type="entry name" value="FAD/NAD-bd_sf"/>
</dbReference>
<dbReference type="InterPro" id="IPR023753">
    <property type="entry name" value="FAD/NAD-binding_dom"/>
</dbReference>
<dbReference type="InterPro" id="IPR016156">
    <property type="entry name" value="FAD/NAD-linked_Rdtase_dimer_sf"/>
</dbReference>
<dbReference type="InterPro" id="IPR006258">
    <property type="entry name" value="Lipoamide_DH"/>
</dbReference>
<dbReference type="InterPro" id="IPR001100">
    <property type="entry name" value="Pyr_nuc-diS_OxRdtase"/>
</dbReference>
<dbReference type="InterPro" id="IPR004099">
    <property type="entry name" value="Pyr_nucl-diS_OxRdtase_dimer"/>
</dbReference>
<dbReference type="InterPro" id="IPR012999">
    <property type="entry name" value="Pyr_OxRdtase_I_AS"/>
</dbReference>
<dbReference type="NCBIfam" id="TIGR01350">
    <property type="entry name" value="lipoamide_DH"/>
    <property type="match status" value="1"/>
</dbReference>
<dbReference type="PANTHER" id="PTHR22912:SF151">
    <property type="entry name" value="DIHYDROLIPOYL DEHYDROGENASE, MITOCHONDRIAL"/>
    <property type="match status" value="1"/>
</dbReference>
<dbReference type="PANTHER" id="PTHR22912">
    <property type="entry name" value="DISULFIDE OXIDOREDUCTASE"/>
    <property type="match status" value="1"/>
</dbReference>
<dbReference type="Pfam" id="PF07992">
    <property type="entry name" value="Pyr_redox_2"/>
    <property type="match status" value="1"/>
</dbReference>
<dbReference type="Pfam" id="PF02852">
    <property type="entry name" value="Pyr_redox_dim"/>
    <property type="match status" value="1"/>
</dbReference>
<dbReference type="PIRSF" id="PIRSF000350">
    <property type="entry name" value="Mercury_reductase_MerA"/>
    <property type="match status" value="1"/>
</dbReference>
<dbReference type="PRINTS" id="PR00368">
    <property type="entry name" value="FADPNR"/>
</dbReference>
<dbReference type="PRINTS" id="PR00411">
    <property type="entry name" value="PNDRDTASEI"/>
</dbReference>
<dbReference type="SUPFAM" id="SSF51905">
    <property type="entry name" value="FAD/NAD(P)-binding domain"/>
    <property type="match status" value="1"/>
</dbReference>
<dbReference type="SUPFAM" id="SSF55424">
    <property type="entry name" value="FAD/NAD-linked reductases, dimerisation (C-terminal) domain"/>
    <property type="match status" value="1"/>
</dbReference>
<dbReference type="PROSITE" id="PS00076">
    <property type="entry name" value="PYRIDINE_REDOX_1"/>
    <property type="match status" value="1"/>
</dbReference>
<feature type="initiator methionine" description="Removed" evidence="2">
    <location>
        <position position="1"/>
    </location>
</feature>
<feature type="chain" id="PRO_0000068051" description="Dihydrolipoyl dehydrogenase">
    <location>
        <begin position="2"/>
        <end position="474"/>
    </location>
</feature>
<feature type="active site" description="Proton acceptor" evidence="1">
    <location>
        <position position="459"/>
    </location>
</feature>
<feature type="binding site" evidence="1">
    <location>
        <begin position="36"/>
        <end position="44"/>
    </location>
    <ligand>
        <name>FAD</name>
        <dbReference type="ChEBI" id="CHEBI:57692"/>
    </ligand>
</feature>
<feature type="binding site" evidence="1">
    <location>
        <position position="53"/>
    </location>
    <ligand>
        <name>FAD</name>
        <dbReference type="ChEBI" id="CHEBI:57692"/>
    </ligand>
</feature>
<feature type="binding site" evidence="1">
    <location>
        <position position="119"/>
    </location>
    <ligand>
        <name>FAD</name>
        <dbReference type="ChEBI" id="CHEBI:57692"/>
    </ligand>
</feature>
<feature type="binding site" evidence="1">
    <location>
        <begin position="184"/>
        <end position="188"/>
    </location>
    <ligand>
        <name>NAD(+)</name>
        <dbReference type="ChEBI" id="CHEBI:57540"/>
    </ligand>
</feature>
<feature type="binding site" evidence="1">
    <location>
        <position position="207"/>
    </location>
    <ligand>
        <name>NAD(+)</name>
        <dbReference type="ChEBI" id="CHEBI:57540"/>
    </ligand>
</feature>
<feature type="binding site" evidence="1">
    <location>
        <begin position="275"/>
        <end position="278"/>
    </location>
    <ligand>
        <name>NAD(+)</name>
        <dbReference type="ChEBI" id="CHEBI:57540"/>
    </ligand>
</feature>
<feature type="binding site" evidence="1">
    <location>
        <position position="323"/>
    </location>
    <ligand>
        <name>FAD</name>
        <dbReference type="ChEBI" id="CHEBI:57692"/>
    </ligand>
</feature>
<feature type="binding site" evidence="1">
    <location>
        <position position="331"/>
    </location>
    <ligand>
        <name>FAD</name>
        <dbReference type="ChEBI" id="CHEBI:57692"/>
    </ligand>
</feature>
<feature type="disulfide bond" description="Redox-active" evidence="1">
    <location>
        <begin position="44"/>
        <end position="49"/>
    </location>
</feature>
<name>DLDH_SYNY3</name>
<keyword id="KW-0997">Cell inner membrane</keyword>
<keyword id="KW-1003">Cell membrane</keyword>
<keyword id="KW-0903">Direct protein sequencing</keyword>
<keyword id="KW-1015">Disulfide bond</keyword>
<keyword id="KW-0274">FAD</keyword>
<keyword id="KW-0285">Flavoprotein</keyword>
<keyword id="KW-0472">Membrane</keyword>
<keyword id="KW-0520">NAD</keyword>
<keyword id="KW-0560">Oxidoreductase</keyword>
<keyword id="KW-0676">Redox-active center</keyword>
<keyword id="KW-1185">Reference proteome</keyword>
<protein>
    <recommendedName>
        <fullName>Dihydrolipoyl dehydrogenase</fullName>
        <ecNumber>1.8.1.4</ecNumber>
    </recommendedName>
    <alternativeName>
        <fullName>Dihydrolipoamide dehydrogenase</fullName>
        <shortName>LPD</shortName>
    </alternativeName>
    <alternativeName>
        <fullName>E3 component of pyruvate complex</fullName>
    </alternativeName>
</protein>